<feature type="chain" id="PRO_1000144337" description="Large ribosomal subunit protein uL14">
    <location>
        <begin position="1"/>
        <end position="122"/>
    </location>
</feature>
<proteinExistence type="inferred from homology"/>
<comment type="function">
    <text evidence="1">Binds to 23S rRNA. Forms part of two intersubunit bridges in the 70S ribosome.</text>
</comment>
<comment type="subunit">
    <text evidence="1">Part of the 50S ribosomal subunit. Forms a cluster with proteins L3 and L19. In the 70S ribosome, L14 and L19 interact and together make contacts with the 16S rRNA in bridges B5 and B8.</text>
</comment>
<comment type="similarity">
    <text evidence="1">Belongs to the universal ribosomal protein uL14 family.</text>
</comment>
<evidence type="ECO:0000255" key="1">
    <source>
        <dbReference type="HAMAP-Rule" id="MF_01367"/>
    </source>
</evidence>
<evidence type="ECO:0000305" key="2"/>
<sequence length="122" mass="13006">MIQTETRLKVADNSGAREILTIKVLGGSGRKFANIGDVIVASVKQATPGGAVKKGDVVKAVIVRTKSGARRADGSYIKFDENAAVIIREDKTPRGTRIFGPVARELREGGFMKIVSLAPEVL</sequence>
<keyword id="KW-0687">Ribonucleoprotein</keyword>
<keyword id="KW-0689">Ribosomal protein</keyword>
<keyword id="KW-0694">RNA-binding</keyword>
<keyword id="KW-0699">rRNA-binding</keyword>
<accession>B1I8K8</accession>
<reference key="1">
    <citation type="journal article" date="2010" name="Genome Biol.">
        <title>Structure and dynamics of the pan-genome of Streptococcus pneumoniae and closely related species.</title>
        <authorList>
            <person name="Donati C."/>
            <person name="Hiller N.L."/>
            <person name="Tettelin H."/>
            <person name="Muzzi A."/>
            <person name="Croucher N.J."/>
            <person name="Angiuoli S.V."/>
            <person name="Oggioni M."/>
            <person name="Dunning Hotopp J.C."/>
            <person name="Hu F.Z."/>
            <person name="Riley D.R."/>
            <person name="Covacci A."/>
            <person name="Mitchell T.J."/>
            <person name="Bentley S.D."/>
            <person name="Kilian M."/>
            <person name="Ehrlich G.D."/>
            <person name="Rappuoli R."/>
            <person name="Moxon E.R."/>
            <person name="Masignani V."/>
        </authorList>
    </citation>
    <scope>NUCLEOTIDE SEQUENCE [LARGE SCALE GENOMIC DNA]</scope>
    <source>
        <strain>Hungary19A-6</strain>
    </source>
</reference>
<organism>
    <name type="scientific">Streptococcus pneumoniae (strain Hungary19A-6)</name>
    <dbReference type="NCBI Taxonomy" id="487214"/>
    <lineage>
        <taxon>Bacteria</taxon>
        <taxon>Bacillati</taxon>
        <taxon>Bacillota</taxon>
        <taxon>Bacilli</taxon>
        <taxon>Lactobacillales</taxon>
        <taxon>Streptococcaceae</taxon>
        <taxon>Streptococcus</taxon>
    </lineage>
</organism>
<protein>
    <recommendedName>
        <fullName evidence="1">Large ribosomal subunit protein uL14</fullName>
    </recommendedName>
    <alternativeName>
        <fullName evidence="2">50S ribosomal protein L14</fullName>
    </alternativeName>
</protein>
<gene>
    <name evidence="1" type="primary">rplN</name>
    <name type="ordered locus">SPH_0333</name>
</gene>
<dbReference type="EMBL" id="CP000936">
    <property type="protein sequence ID" value="ACA37197.1"/>
    <property type="molecule type" value="Genomic_DNA"/>
</dbReference>
<dbReference type="RefSeq" id="WP_000616545.1">
    <property type="nucleotide sequence ID" value="NC_010380.1"/>
</dbReference>
<dbReference type="SMR" id="B1I8K8"/>
<dbReference type="GeneID" id="93738967"/>
<dbReference type="KEGG" id="spv:SPH_0333"/>
<dbReference type="HOGENOM" id="CLU_095071_2_1_9"/>
<dbReference type="Proteomes" id="UP000002163">
    <property type="component" value="Chromosome"/>
</dbReference>
<dbReference type="GO" id="GO:0022625">
    <property type="term" value="C:cytosolic large ribosomal subunit"/>
    <property type="evidence" value="ECO:0007669"/>
    <property type="project" value="TreeGrafter"/>
</dbReference>
<dbReference type="GO" id="GO:0070180">
    <property type="term" value="F:large ribosomal subunit rRNA binding"/>
    <property type="evidence" value="ECO:0007669"/>
    <property type="project" value="TreeGrafter"/>
</dbReference>
<dbReference type="GO" id="GO:0003735">
    <property type="term" value="F:structural constituent of ribosome"/>
    <property type="evidence" value="ECO:0007669"/>
    <property type="project" value="InterPro"/>
</dbReference>
<dbReference type="GO" id="GO:0006412">
    <property type="term" value="P:translation"/>
    <property type="evidence" value="ECO:0007669"/>
    <property type="project" value="UniProtKB-UniRule"/>
</dbReference>
<dbReference type="CDD" id="cd00337">
    <property type="entry name" value="Ribosomal_uL14"/>
    <property type="match status" value="1"/>
</dbReference>
<dbReference type="FunFam" id="2.40.150.20:FF:000001">
    <property type="entry name" value="50S ribosomal protein L14"/>
    <property type="match status" value="1"/>
</dbReference>
<dbReference type="Gene3D" id="2.40.150.20">
    <property type="entry name" value="Ribosomal protein L14"/>
    <property type="match status" value="1"/>
</dbReference>
<dbReference type="HAMAP" id="MF_01367">
    <property type="entry name" value="Ribosomal_uL14"/>
    <property type="match status" value="1"/>
</dbReference>
<dbReference type="InterPro" id="IPR000218">
    <property type="entry name" value="Ribosomal_uL14"/>
</dbReference>
<dbReference type="InterPro" id="IPR005745">
    <property type="entry name" value="Ribosomal_uL14_bac-type"/>
</dbReference>
<dbReference type="InterPro" id="IPR019972">
    <property type="entry name" value="Ribosomal_uL14_CS"/>
</dbReference>
<dbReference type="InterPro" id="IPR036853">
    <property type="entry name" value="Ribosomal_uL14_sf"/>
</dbReference>
<dbReference type="NCBIfam" id="TIGR01067">
    <property type="entry name" value="rplN_bact"/>
    <property type="match status" value="1"/>
</dbReference>
<dbReference type="PANTHER" id="PTHR11761">
    <property type="entry name" value="50S/60S RIBOSOMAL PROTEIN L14/L23"/>
    <property type="match status" value="1"/>
</dbReference>
<dbReference type="PANTHER" id="PTHR11761:SF3">
    <property type="entry name" value="LARGE RIBOSOMAL SUBUNIT PROTEIN UL14M"/>
    <property type="match status" value="1"/>
</dbReference>
<dbReference type="Pfam" id="PF00238">
    <property type="entry name" value="Ribosomal_L14"/>
    <property type="match status" value="1"/>
</dbReference>
<dbReference type="SMART" id="SM01374">
    <property type="entry name" value="Ribosomal_L14"/>
    <property type="match status" value="1"/>
</dbReference>
<dbReference type="SUPFAM" id="SSF50193">
    <property type="entry name" value="Ribosomal protein L14"/>
    <property type="match status" value="1"/>
</dbReference>
<dbReference type="PROSITE" id="PS00049">
    <property type="entry name" value="RIBOSOMAL_L14"/>
    <property type="match status" value="1"/>
</dbReference>
<name>RL14_STRPI</name>